<proteinExistence type="evidence at protein level"/>
<protein>
    <recommendedName>
        <fullName>Polyubiquitin-C</fullName>
    </recommendedName>
    <component>
        <recommendedName>
            <fullName>Ubiquitin</fullName>
        </recommendedName>
    </component>
    <component>
        <recommendedName>
            <fullName>Ubiquitin-related</fullName>
        </recommendedName>
    </component>
</protein>
<gene>
    <name type="primary">Ubc</name>
</gene>
<comment type="function">
    <molecule>Ubiquitin</molecule>
    <text evidence="2">Exists either covalently attached to another protein, or free (unanchored). When covalently bound, it is conjugated to target proteins via an isopeptide bond either as a monomer (monoubiquitin), a polymer linked via different Lys residues of the ubiquitin (polyubiquitin chains) or a linear polymer linked via the initiator Met of the ubiquitin (linear polyubiquitin chains). Polyubiquitin chains, when attached to a target protein, have different functions depending on the Lys residue of the ubiquitin that is linked: Lys-6-linked may be involved in DNA repair; Lys-11-linked is involved in ERAD (endoplasmic reticulum-associated degradation) and in cell-cycle regulation; Lys-29-linked is involved in proteotoxic stress response and cell cycle; Lys-33-linked is involved in kinase modification; Lys-48-linked is involved in protein degradation via the proteasome; Lys-63-linked is involved in endocytosis, DNA-damage responses as well as in signaling processes leading to activation of the transcription factor NF-kappa-B. Linear polymer chains formed via attachment by the initiator Met lead to cell signaling. Ubiquitin is usually conjugated to Lys residues of target proteins, however, in rare cases, conjugation to Cys or Ser residues has been observed. When polyubiquitin is free (unanchored-polyubiquitin), it also has distinct roles, such as in activation of protein kinases, and in signaling (By similarity). During ubiquitination, the acceptor ubiquitin is positioned in the active site via direct interaction with the E2 ubiquitin-conjugating enzymes such as UBE2R2 (By similarity). As a monoubiquitin, its C-terminal glycine is recognized as a C-degron by Cul2-RING (CRL2) E3 ubiquitin-protein ligase complexes (By similarity).</text>
</comment>
<comment type="subcellular location">
    <molecule>Ubiquitin</molecule>
    <subcellularLocation>
        <location evidence="1">Cytoplasm</location>
    </subcellularLocation>
    <subcellularLocation>
        <location evidence="1">Nucleus</location>
    </subcellularLocation>
    <subcellularLocation>
        <location evidence="2">Mitochondrion outer membrane</location>
        <topology evidence="2">Peripheral membrane protein</topology>
    </subcellularLocation>
</comment>
<comment type="PTM">
    <molecule>Ubiquitin</molecule>
    <text evidence="2">Phosphorylated at Ser-65 by PINK1 during mitophagy. Phosphorylated ubiquitin specifically binds and activates parkin (PRKN), triggering mitophagy. Phosphorylation does not affect E1-mediated E2 charging of ubiquitin but affects discharging of E2 enzymes to form polyubiquitin chains. It also affects deubiquitination by deubiquitinase enzymes such as USP30.</text>
</comment>
<comment type="PTM">
    <molecule>Ubiquitin</molecule>
    <text evidence="2">Mono-ADP-ribosylated at the C-terminus by PARP9, a component of the PPAR9-DTX3L complex. ADP-ribosylation requires processing by E1 and E2 enzymes and prevents ubiquitin conjugation to substrates such as histones.</text>
</comment>
<comment type="miscellaneous">
    <text>Ubiquitin is encoded by 4 different genes. Uba52 and Rps27a genes code for a single copy of ubiquitin fused to the ribosomal proteins eL40 and eS31, respectively. UBB and UBC genes code for a polyubiquitin precursor with exact head to tail repeats, the number of repeats differ between species and strains.</text>
</comment>
<comment type="miscellaneous">
    <text>For the sake of clarity sequence features are annotated only for the first chain, and are not repeated for each of the following chains.</text>
</comment>
<comment type="similarity">
    <text evidence="4">Belongs to the ubiquitin family.</text>
</comment>
<dbReference type="EMBL" id="D17296">
    <property type="protein sequence ID" value="BAA04129.1"/>
    <property type="molecule type" value="mRNA"/>
</dbReference>
<dbReference type="EMBL" id="BC103477">
    <property type="protein sequence ID" value="AAI03478.1"/>
    <property type="molecule type" value="mRNA"/>
</dbReference>
<dbReference type="PIR" id="S45359">
    <property type="entry name" value="S45359"/>
</dbReference>
<dbReference type="RefSeq" id="NP_059010.1">
    <property type="nucleotide sequence ID" value="NM_017314.1"/>
</dbReference>
<dbReference type="PDB" id="5L9U">
    <property type="method" value="EM"/>
    <property type="resolution" value="6.40 A"/>
    <property type="chains" value="S=1-78"/>
</dbReference>
<dbReference type="PDBsum" id="5L9U"/>
<dbReference type="SMR" id="Q63429"/>
<dbReference type="BioGRID" id="248372">
    <property type="interactions" value="819"/>
</dbReference>
<dbReference type="FunCoup" id="Q63429">
    <property type="interactions" value="1500"/>
</dbReference>
<dbReference type="IntAct" id="Q63429">
    <property type="interactions" value="2"/>
</dbReference>
<dbReference type="MINT" id="Q63429"/>
<dbReference type="STRING" id="10116.ENSRNOP00000074688"/>
<dbReference type="iPTMnet" id="Q63429"/>
<dbReference type="PhosphoSitePlus" id="Q63429"/>
<dbReference type="jPOST" id="Q63429"/>
<dbReference type="PaxDb" id="10116-ENSRNOP00000043934"/>
<dbReference type="GeneID" id="50522"/>
<dbReference type="KEGG" id="rno:50522"/>
<dbReference type="UCSC" id="RGD:621244">
    <property type="organism name" value="rat"/>
</dbReference>
<dbReference type="AGR" id="RGD:621244"/>
<dbReference type="CTD" id="7316"/>
<dbReference type="RGD" id="621244">
    <property type="gene designation" value="Ubc"/>
</dbReference>
<dbReference type="eggNOG" id="KOG0001">
    <property type="taxonomic scope" value="Eukaryota"/>
</dbReference>
<dbReference type="InParanoid" id="Q63429"/>
<dbReference type="PhylomeDB" id="Q63429"/>
<dbReference type="Reactome" id="R-RNO-110312">
    <property type="pathway name" value="Translesion synthesis by REV1"/>
</dbReference>
<dbReference type="Reactome" id="R-RNO-110314">
    <property type="pathway name" value="Recognition of DNA damage by PCNA-containing replication complex"/>
</dbReference>
<dbReference type="Reactome" id="R-RNO-110320">
    <property type="pathway name" value="Translesion Synthesis by POLH"/>
</dbReference>
<dbReference type="Reactome" id="R-RNO-1169091">
    <property type="pathway name" value="Activation of NF-kappaB in B cells"/>
</dbReference>
<dbReference type="Reactome" id="R-RNO-1234176">
    <property type="pathway name" value="Oxygen-dependent proline hydroxylation of Hypoxia-inducible Factor Alpha"/>
</dbReference>
<dbReference type="Reactome" id="R-RNO-1253288">
    <property type="pathway name" value="Downregulation of ERBB4 signaling"/>
</dbReference>
<dbReference type="Reactome" id="R-RNO-1295596">
    <property type="pathway name" value="Spry regulation of FGF signaling"/>
</dbReference>
<dbReference type="Reactome" id="R-RNO-1358803">
    <property type="pathway name" value="Downregulation of ERBB2:ERBB3 signaling"/>
</dbReference>
<dbReference type="Reactome" id="R-RNO-168638">
    <property type="pathway name" value="NOD1/2 Signaling Pathway"/>
</dbReference>
<dbReference type="Reactome" id="R-RNO-174048">
    <property type="pathway name" value="APC/C:Cdc20 mediated degradation of Cyclin B"/>
</dbReference>
<dbReference type="Reactome" id="R-RNO-174084">
    <property type="pathway name" value="Autodegradation of Cdh1 by Cdh1:APC/C"/>
</dbReference>
<dbReference type="Reactome" id="R-RNO-174113">
    <property type="pathway name" value="SCF-beta-TrCP mediated degradation of Emi1"/>
</dbReference>
<dbReference type="Reactome" id="R-RNO-174154">
    <property type="pathway name" value="APC/C:Cdc20 mediated degradation of Securin"/>
</dbReference>
<dbReference type="Reactome" id="R-RNO-174178">
    <property type="pathway name" value="APC/C:Cdh1 mediated degradation of Cdc20 and other APC/C:Cdh1 targeted proteins in late mitosis/early G1"/>
</dbReference>
<dbReference type="Reactome" id="R-RNO-174184">
    <property type="pathway name" value="Cdc20:Phospho-APC/C mediated degradation of Cyclin A"/>
</dbReference>
<dbReference type="Reactome" id="R-RNO-179409">
    <property type="pathway name" value="APC-Cdc20 mediated degradation of Nek2A"/>
</dbReference>
<dbReference type="Reactome" id="R-RNO-182971">
    <property type="pathway name" value="EGFR downregulation"/>
</dbReference>
<dbReference type="Reactome" id="R-RNO-187577">
    <property type="pathway name" value="SCF(Skp2)-mediated degradation of p27/p21"/>
</dbReference>
<dbReference type="Reactome" id="R-RNO-195253">
    <property type="pathway name" value="Degradation of beta-catenin by the destruction complex"/>
</dbReference>
<dbReference type="Reactome" id="R-RNO-201681">
    <property type="pathway name" value="TCF dependent signaling in response to WNT"/>
</dbReference>
<dbReference type="Reactome" id="R-RNO-205043">
    <property type="pathway name" value="NRIF signals cell death from the nucleus"/>
</dbReference>
<dbReference type="Reactome" id="R-RNO-209543">
    <property type="pathway name" value="p75NTR recruits signalling complexes"/>
</dbReference>
<dbReference type="Reactome" id="R-RNO-209560">
    <property type="pathway name" value="NF-kB is activated and signals survival"/>
</dbReference>
<dbReference type="Reactome" id="R-RNO-2122948">
    <property type="pathway name" value="Activated NOTCH1 Transmits Signal to the Nucleus"/>
</dbReference>
<dbReference type="Reactome" id="R-RNO-2173788">
    <property type="pathway name" value="Downregulation of TGF-beta receptor signaling"/>
</dbReference>
<dbReference type="Reactome" id="R-RNO-2173791">
    <property type="pathway name" value="TGF-beta receptor signaling in EMT (epithelial to mesenchymal transition)"/>
</dbReference>
<dbReference type="Reactome" id="R-RNO-2173795">
    <property type="pathway name" value="Downregulation of SMAD2/3:SMAD4 transcriptional activity"/>
</dbReference>
<dbReference type="Reactome" id="R-RNO-2173796">
    <property type="pathway name" value="SMAD2/SMAD3:SMAD4 heterotrimer regulates transcription"/>
</dbReference>
<dbReference type="Reactome" id="R-RNO-2467813">
    <property type="pathway name" value="Separation of Sister Chromatids"/>
</dbReference>
<dbReference type="Reactome" id="R-RNO-2559580">
    <property type="pathway name" value="Oxidative Stress Induced Senescence"/>
</dbReference>
<dbReference type="Reactome" id="R-RNO-2559582">
    <property type="pathway name" value="Senescence-Associated Secretory Phenotype (SASP)"/>
</dbReference>
<dbReference type="Reactome" id="R-RNO-2559585">
    <property type="pathway name" value="Oncogene Induced Senescence"/>
</dbReference>
<dbReference type="Reactome" id="R-RNO-2565942">
    <property type="pathway name" value="Regulation of PLK1 Activity at G2/M Transition"/>
</dbReference>
<dbReference type="Reactome" id="R-RNO-2672351">
    <property type="pathway name" value="Stimuli-sensing channels"/>
</dbReference>
<dbReference type="Reactome" id="R-RNO-3134975">
    <property type="pathway name" value="Regulation of innate immune responses to cytosolic DNA"/>
</dbReference>
<dbReference type="Reactome" id="R-RNO-349425">
    <property type="pathway name" value="Autodegradation of the E3 ubiquitin ligase COP1"/>
</dbReference>
<dbReference type="Reactome" id="R-RNO-3769402">
    <property type="pathway name" value="Deactivation of the beta-catenin transactivating complex"/>
</dbReference>
<dbReference type="Reactome" id="R-RNO-382556">
    <property type="pathway name" value="ABC-family proteins mediated transport"/>
</dbReference>
<dbReference type="Reactome" id="R-RNO-450302">
    <property type="pathway name" value="activated TAK1 mediates p38 MAPK activation"/>
</dbReference>
<dbReference type="Reactome" id="R-RNO-450321">
    <property type="pathway name" value="JNK (c-Jun kinases) phosphorylation and activation mediated by activated human TAK1"/>
</dbReference>
<dbReference type="Reactome" id="R-RNO-450408">
    <property type="pathway name" value="AUF1 (hnRNP D0) binds and destabilizes mRNA"/>
</dbReference>
<dbReference type="Reactome" id="R-RNO-4608870">
    <property type="pathway name" value="Asymmetric localization of PCP proteins"/>
</dbReference>
<dbReference type="Reactome" id="R-RNO-4641257">
    <property type="pathway name" value="Degradation of AXIN"/>
</dbReference>
<dbReference type="Reactome" id="R-RNO-4641258">
    <property type="pathway name" value="Degradation of DVL"/>
</dbReference>
<dbReference type="Reactome" id="R-RNO-4641263">
    <property type="pathway name" value="Regulation of FZD by ubiquitination"/>
</dbReference>
<dbReference type="Reactome" id="R-RNO-532668">
    <property type="pathway name" value="N-glycan trimming in the ER and Calnexin/Calreticulin cycle"/>
</dbReference>
<dbReference type="Reactome" id="R-RNO-5357905">
    <property type="pathway name" value="Regulation of TNFR1 signaling"/>
</dbReference>
<dbReference type="Reactome" id="R-RNO-5357956">
    <property type="pathway name" value="TNFR1-induced NF-kappa-B signaling pathway"/>
</dbReference>
<dbReference type="Reactome" id="R-RNO-5358346">
    <property type="pathway name" value="Hedgehog ligand biogenesis"/>
</dbReference>
<dbReference type="Reactome" id="R-RNO-5607761">
    <property type="pathway name" value="Dectin-1 mediated noncanonical NF-kB signaling"/>
</dbReference>
<dbReference type="Reactome" id="R-RNO-5610780">
    <property type="pathway name" value="Degradation of GLI1 by the proteasome"/>
</dbReference>
<dbReference type="Reactome" id="R-RNO-5610785">
    <property type="pathway name" value="GLI3 is processed to GLI3R by the proteasome"/>
</dbReference>
<dbReference type="Reactome" id="R-RNO-5632684">
    <property type="pathway name" value="Hedgehog 'on' state"/>
</dbReference>
<dbReference type="Reactome" id="R-RNO-5654726">
    <property type="pathway name" value="Negative regulation of FGFR1 signaling"/>
</dbReference>
<dbReference type="Reactome" id="R-RNO-5654727">
    <property type="pathway name" value="Negative regulation of FGFR2 signaling"/>
</dbReference>
<dbReference type="Reactome" id="R-RNO-5654732">
    <property type="pathway name" value="Negative regulation of FGFR3 signaling"/>
</dbReference>
<dbReference type="Reactome" id="R-RNO-5654733">
    <property type="pathway name" value="Negative regulation of FGFR4 signaling"/>
</dbReference>
<dbReference type="Reactome" id="R-RNO-5655862">
    <property type="pathway name" value="Translesion synthesis by POLK"/>
</dbReference>
<dbReference type="Reactome" id="R-RNO-5656121">
    <property type="pathway name" value="Translesion synthesis by POLI"/>
</dbReference>
<dbReference type="Reactome" id="R-RNO-5656169">
    <property type="pathway name" value="Termination of translesion DNA synthesis"/>
</dbReference>
<dbReference type="Reactome" id="R-RNO-5658442">
    <property type="pathway name" value="Regulation of RAS by GAPs"/>
</dbReference>
<dbReference type="Reactome" id="R-RNO-5668541">
    <property type="pathway name" value="TNFR2 non-canonical NF-kB pathway"/>
</dbReference>
<dbReference type="Reactome" id="R-RNO-5675221">
    <property type="pathway name" value="Negative regulation of MAPK pathway"/>
</dbReference>
<dbReference type="Reactome" id="R-RNO-5675482">
    <property type="pathway name" value="Regulation of necroptotic cell death"/>
</dbReference>
<dbReference type="Reactome" id="R-RNO-5676590">
    <property type="pathway name" value="NIK--&gt;noncanonical NF-kB signaling"/>
</dbReference>
<dbReference type="Reactome" id="R-RNO-5685942">
    <property type="pathway name" value="HDR through Homologous Recombination (HRR)"/>
</dbReference>
<dbReference type="Reactome" id="R-RNO-5687128">
    <property type="pathway name" value="MAPK6/MAPK4 signaling"/>
</dbReference>
<dbReference type="Reactome" id="R-RNO-5689603">
    <property type="pathway name" value="UCH proteinases"/>
</dbReference>
<dbReference type="Reactome" id="R-RNO-5689877">
    <property type="pathway name" value="Josephin domain DUBs"/>
</dbReference>
<dbReference type="Reactome" id="R-RNO-5689880">
    <property type="pathway name" value="Ub-specific processing proteases"/>
</dbReference>
<dbReference type="Reactome" id="R-RNO-5689896">
    <property type="pathway name" value="Ovarian tumor domain proteases"/>
</dbReference>
<dbReference type="Reactome" id="R-RNO-5689901">
    <property type="pathway name" value="Metalloprotease DUBs"/>
</dbReference>
<dbReference type="Reactome" id="R-RNO-5693565">
    <property type="pathway name" value="Recruitment and ATM-mediated phosphorylation of repair and signaling proteins at DNA double strand breaks"/>
</dbReference>
<dbReference type="Reactome" id="R-RNO-5696394">
    <property type="pathway name" value="DNA Damage Recognition in GG-NER"/>
</dbReference>
<dbReference type="Reactome" id="R-RNO-5696395">
    <property type="pathway name" value="Formation of Incision Complex in GG-NER"/>
</dbReference>
<dbReference type="Reactome" id="R-RNO-5696397">
    <property type="pathway name" value="Gap-filling DNA repair synthesis and ligation in GG-NER"/>
</dbReference>
<dbReference type="Reactome" id="R-RNO-5696400">
    <property type="pathway name" value="Dual Incision in GG-NER"/>
</dbReference>
<dbReference type="Reactome" id="R-RNO-6781823">
    <property type="pathway name" value="Formation of TC-NER Pre-Incision Complex"/>
</dbReference>
<dbReference type="Reactome" id="R-RNO-6782135">
    <property type="pathway name" value="Dual incision in TC-NER"/>
</dbReference>
<dbReference type="Reactome" id="R-RNO-6782210">
    <property type="pathway name" value="Gap-filling DNA repair synthesis and ligation in TC-NER"/>
</dbReference>
<dbReference type="Reactome" id="R-RNO-6783310">
    <property type="pathway name" value="Fanconi Anemia Pathway"/>
</dbReference>
<dbReference type="Reactome" id="R-RNO-6804756">
    <property type="pathway name" value="Regulation of TP53 Activity through Phosphorylation"/>
</dbReference>
<dbReference type="Reactome" id="R-RNO-6804757">
    <property type="pathway name" value="Regulation of TP53 Degradation"/>
</dbReference>
<dbReference type="Reactome" id="R-RNO-6804760">
    <property type="pathway name" value="Regulation of TP53 Activity through Methylation"/>
</dbReference>
<dbReference type="Reactome" id="R-RNO-6807004">
    <property type="pathway name" value="Negative regulation of MET activity"/>
</dbReference>
<dbReference type="Reactome" id="R-RNO-68867">
    <property type="pathway name" value="Assembly of the pre-replicative complex"/>
</dbReference>
<dbReference type="Reactome" id="R-RNO-68949">
    <property type="pathway name" value="Orc1 removal from chromatin"/>
</dbReference>
<dbReference type="Reactome" id="R-RNO-69017">
    <property type="pathway name" value="CDK-mediated phosphorylation and removal of Cdc6"/>
</dbReference>
<dbReference type="Reactome" id="R-RNO-69231">
    <property type="pathway name" value="Cyclin D associated events in G1"/>
</dbReference>
<dbReference type="Reactome" id="R-RNO-69481">
    <property type="pathway name" value="G2/M Checkpoints"/>
</dbReference>
<dbReference type="Reactome" id="R-RNO-69541">
    <property type="pathway name" value="Stabilization of p53"/>
</dbReference>
<dbReference type="Reactome" id="R-RNO-69601">
    <property type="pathway name" value="Ubiquitin Mediated Degradation of Phosphorylated Cdc25A"/>
</dbReference>
<dbReference type="Reactome" id="R-RNO-75815">
    <property type="pathway name" value="Ubiquitin-dependent degradation of Cyclin D"/>
</dbReference>
<dbReference type="Reactome" id="R-RNO-8849469">
    <property type="pathway name" value="PTK6 Regulates RTKs and Their Effectors AKT1 and DOK1"/>
</dbReference>
<dbReference type="Reactome" id="R-RNO-8852276">
    <property type="pathway name" value="The role of GTSE1 in G2/M progression after G2 checkpoint"/>
</dbReference>
<dbReference type="Reactome" id="R-RNO-8854050">
    <property type="pathway name" value="FBXL7 down-regulates AURKA during mitotic entry and in early mitosis"/>
</dbReference>
<dbReference type="Reactome" id="R-RNO-8856825">
    <property type="pathway name" value="Cargo recognition for clathrin-mediated endocytosis"/>
</dbReference>
<dbReference type="Reactome" id="R-RNO-8856828">
    <property type="pathway name" value="Clathrin-mediated endocytosis"/>
</dbReference>
<dbReference type="Reactome" id="R-RNO-8863795">
    <property type="pathway name" value="Downregulation of ERBB2 signaling"/>
</dbReference>
<dbReference type="Reactome" id="R-RNO-8866427">
    <property type="pathway name" value="VLDLR internalisation and degradation"/>
</dbReference>
<dbReference type="Reactome" id="R-RNO-8866652">
    <property type="pathway name" value="Synthesis of active ubiquitin: roles of E1 and E2 enzymes"/>
</dbReference>
<dbReference type="Reactome" id="R-RNO-8866654">
    <property type="pathway name" value="E3 ubiquitin ligases ubiquitinate target proteins"/>
</dbReference>
<dbReference type="Reactome" id="R-RNO-8939236">
    <property type="pathway name" value="RUNX1 regulates transcription of genes involved in differentiation of HSCs"/>
</dbReference>
<dbReference type="Reactome" id="R-RNO-8941858">
    <property type="pathway name" value="Regulation of RUNX3 expression and activity"/>
</dbReference>
<dbReference type="Reactome" id="R-RNO-8948747">
    <property type="pathway name" value="Regulation of PTEN localization"/>
</dbReference>
<dbReference type="Reactome" id="R-RNO-8948751">
    <property type="pathway name" value="Regulation of PTEN stability and activity"/>
</dbReference>
<dbReference type="Reactome" id="R-RNO-8951664">
    <property type="pathway name" value="Neddylation"/>
</dbReference>
<dbReference type="Reactome" id="R-RNO-901032">
    <property type="pathway name" value="ER Quality Control Compartment (ERQC)"/>
</dbReference>
<dbReference type="Reactome" id="R-RNO-9013507">
    <property type="pathway name" value="NOTCH3 Activation and Transmission of Signal to the Nucleus"/>
</dbReference>
<dbReference type="Reactome" id="R-RNO-9020702">
    <property type="pathway name" value="Interleukin-1 signaling"/>
</dbReference>
<dbReference type="Reactome" id="R-RNO-9033241">
    <property type="pathway name" value="Peroxisomal protein import"/>
</dbReference>
<dbReference type="Reactome" id="R-RNO-909733">
    <property type="pathway name" value="Interferon alpha/beta signaling"/>
</dbReference>
<dbReference type="Reactome" id="R-RNO-912631">
    <property type="pathway name" value="Regulation of signaling by CBL"/>
</dbReference>
<dbReference type="Reactome" id="R-RNO-917729">
    <property type="pathway name" value="Endosomal Sorting Complex Required For Transport (ESCRT)"/>
</dbReference>
<dbReference type="Reactome" id="R-RNO-917937">
    <property type="pathway name" value="Iron uptake and transport"/>
</dbReference>
<dbReference type="Reactome" id="R-RNO-936440">
    <property type="pathway name" value="Negative regulators of DDX58/IFIH1 signaling"/>
</dbReference>
<dbReference type="Reactome" id="R-RNO-936964">
    <property type="pathway name" value="Activation of IRF3, IRF7 mediated by TBK1, IKKEpsilon (IKBKE)"/>
</dbReference>
<dbReference type="Reactome" id="R-RNO-937041">
    <property type="pathway name" value="IKK complex recruitment mediated by RIP1"/>
</dbReference>
<dbReference type="Reactome" id="R-RNO-937042">
    <property type="pathway name" value="IRAK2 mediated activation of TAK1 complex"/>
</dbReference>
<dbReference type="Reactome" id="R-RNO-937072">
    <property type="pathway name" value="TRAF6-mediated induction of TAK1 complex within TLR4 complex"/>
</dbReference>
<dbReference type="Reactome" id="R-RNO-9645460">
    <property type="pathway name" value="Alpha-protein kinase 1 signaling pathway"/>
</dbReference>
<dbReference type="Reactome" id="R-RNO-9646399">
    <property type="pathway name" value="Aggrephagy"/>
</dbReference>
<dbReference type="Reactome" id="R-RNO-9648002">
    <property type="pathway name" value="RAS processing"/>
</dbReference>
<dbReference type="Reactome" id="R-RNO-9664873">
    <property type="pathway name" value="Pexophagy"/>
</dbReference>
<dbReference type="Reactome" id="R-RNO-9705462">
    <property type="pathway name" value="Inactivation of CSF3 (G-CSF) signaling"/>
</dbReference>
<dbReference type="Reactome" id="R-RNO-975163">
    <property type="pathway name" value="IRAK2 mediated activation of TAK1 complex upon TLR7/8 or 9 stimulation"/>
</dbReference>
<dbReference type="Reactome" id="R-RNO-9755511">
    <property type="pathway name" value="KEAP1-NFE2L2 pathway"/>
</dbReference>
<dbReference type="Reactome" id="R-RNO-9758274">
    <property type="pathway name" value="Regulation of NF-kappa B signaling"/>
</dbReference>
<dbReference type="Reactome" id="R-RNO-9762114">
    <property type="pathway name" value="GSK3B and BTRC:CUL1-mediated-degradation of NFE2L2"/>
</dbReference>
<dbReference type="Reactome" id="R-RNO-9824878">
    <property type="pathway name" value="Regulation of TBK1, IKKEpsilon (IKBKE)-mediated activation of IRF3, IRF7"/>
</dbReference>
<dbReference type="Reactome" id="R-RNO-983168">
    <property type="pathway name" value="Antigen processing: Ubiquitination &amp; Proteasome degradation"/>
</dbReference>
<dbReference type="Reactome" id="R-RNO-9861718">
    <property type="pathway name" value="Regulation of pyruvate metabolism"/>
</dbReference>
<dbReference type="PRO" id="PR:Q63429"/>
<dbReference type="Proteomes" id="UP000002494">
    <property type="component" value="Unplaced"/>
</dbReference>
<dbReference type="GO" id="GO:0005737">
    <property type="term" value="C:cytoplasm"/>
    <property type="evidence" value="ECO:0000318"/>
    <property type="project" value="GO_Central"/>
</dbReference>
<dbReference type="GO" id="GO:0005741">
    <property type="term" value="C:mitochondrial outer membrane"/>
    <property type="evidence" value="ECO:0007669"/>
    <property type="project" value="UniProtKB-SubCell"/>
</dbReference>
<dbReference type="GO" id="GO:0005634">
    <property type="term" value="C:nucleus"/>
    <property type="evidence" value="ECO:0000318"/>
    <property type="project" value="GO_Central"/>
</dbReference>
<dbReference type="GO" id="GO:0031386">
    <property type="term" value="F:protein tag activity"/>
    <property type="evidence" value="ECO:0000318"/>
    <property type="project" value="GO_Central"/>
</dbReference>
<dbReference type="GO" id="GO:0003735">
    <property type="term" value="F:structural constituent of ribosome"/>
    <property type="evidence" value="ECO:0000318"/>
    <property type="project" value="GO_Central"/>
</dbReference>
<dbReference type="GO" id="GO:0031625">
    <property type="term" value="F:ubiquitin protein ligase binding"/>
    <property type="evidence" value="ECO:0000318"/>
    <property type="project" value="GO_Central"/>
</dbReference>
<dbReference type="GO" id="GO:0019941">
    <property type="term" value="P:modification-dependent protein catabolic process"/>
    <property type="evidence" value="ECO:0000318"/>
    <property type="project" value="GO_Central"/>
</dbReference>
<dbReference type="GO" id="GO:0016567">
    <property type="term" value="P:protein ubiquitination"/>
    <property type="evidence" value="ECO:0000318"/>
    <property type="project" value="GO_Central"/>
</dbReference>
<dbReference type="GO" id="GO:0006511">
    <property type="term" value="P:ubiquitin-dependent protein catabolic process"/>
    <property type="evidence" value="ECO:0000304"/>
    <property type="project" value="RGD"/>
</dbReference>
<dbReference type="CDD" id="cd01803">
    <property type="entry name" value="Ubl_ubiquitin"/>
    <property type="match status" value="10"/>
</dbReference>
<dbReference type="FunFam" id="3.10.20.90:FF:000158">
    <property type="entry name" value="Polyubiquitin 5"/>
    <property type="match status" value="10"/>
</dbReference>
<dbReference type="FunFam" id="3.10.20.90:FF:000469">
    <property type="entry name" value="Polyubiquitin-C"/>
    <property type="match status" value="1"/>
</dbReference>
<dbReference type="Gene3D" id="3.10.20.90">
    <property type="entry name" value="Phosphatidylinositol 3-kinase Catalytic Subunit, Chain A, domain 1"/>
    <property type="match status" value="11"/>
</dbReference>
<dbReference type="InterPro" id="IPR000626">
    <property type="entry name" value="Ubiquitin-like_dom"/>
</dbReference>
<dbReference type="InterPro" id="IPR029071">
    <property type="entry name" value="Ubiquitin-like_domsf"/>
</dbReference>
<dbReference type="InterPro" id="IPR019954">
    <property type="entry name" value="Ubiquitin_CS"/>
</dbReference>
<dbReference type="InterPro" id="IPR019956">
    <property type="entry name" value="Ubiquitin_dom"/>
</dbReference>
<dbReference type="InterPro" id="IPR050158">
    <property type="entry name" value="Ubiquitin_ubiquitin-like"/>
</dbReference>
<dbReference type="PANTHER" id="PTHR10666">
    <property type="entry name" value="UBIQUITIN"/>
    <property type="match status" value="1"/>
</dbReference>
<dbReference type="Pfam" id="PF00240">
    <property type="entry name" value="ubiquitin"/>
    <property type="match status" value="10"/>
</dbReference>
<dbReference type="PRINTS" id="PR00348">
    <property type="entry name" value="UBIQUITIN"/>
</dbReference>
<dbReference type="SMART" id="SM00213">
    <property type="entry name" value="UBQ"/>
    <property type="match status" value="10"/>
</dbReference>
<dbReference type="SUPFAM" id="SSF54236">
    <property type="entry name" value="Ubiquitin-like"/>
    <property type="match status" value="10"/>
</dbReference>
<dbReference type="PROSITE" id="PS00299">
    <property type="entry name" value="UBIQUITIN_1"/>
    <property type="match status" value="10"/>
</dbReference>
<dbReference type="PROSITE" id="PS50053">
    <property type="entry name" value="UBIQUITIN_2"/>
    <property type="match status" value="10"/>
</dbReference>
<sequence length="810" mass="91087">MQIFVKTLTGKTITLEVEPSDTIENVKAKIQDKEGIPPDQQRLIFAGKQLEDGRTLSDYNIQKESTLHLVLRLRGGMQIFVKTLTGKTITLEVEPSDTIENVKAKIQDKEGIPPDQQRLIFAGKQLEDGRTLSDYNIQKESTLHLVLRLRGGMQIFVKTLTGKTITLEVEPSDTIENVKAKIQDKEGIPPDQQRLIFAGKQLEDGRTLSDYNIQKESTLHLVLRLRGGMQIFVKTLTGKTITLEVEPSDTIENVKAKIQDKEGIPPDQQRLIFAGKQLEDGRTLSDYNIQKESTLHLVLRLRGGMQIFVKTLTGKTITLEVEPSDTIENVKAKIQDKEGIPPDQQRLIFAGKQLEDGRTLSDYNIQKESTLHLVLRLRGGMQIFVKTLTGKTITLEVEPSDTIENVKAKIQDKEGIPPDQQRLIFAGKQLEDGRTLSDYNIQKESTLHLVLRLRGGMQIFVKTLTGKTITLEVEPSDTIENVKAKIQDKEGIPPDQQRLIFAGKQLEDGRTLSDYNIQKESTLHLVLRLRGGMQIFVKTLTGKTITLEVEPSDTIENVKAKIQDKEGIPPDQQRLIFAGKQLEDGRTLSDYNIQKESTLHLVLRLRGGMQIFVKTLTGKTITLEVEPSDTIENVKAKIQDKEGIPPDQQRLIFAGKQLEDGRTLSDYNIQKESTLHLVLRLRGGMQIFVKTLTGKTITLEVEPSDTIENVKAKIQDKEGIPPDQQRLIFAGKQLEDGRTLSDYNIQKESTLHLVLRLRGGMQIFVKTLTGKTITLEVEPSVNTKKVKQEDTRTFLTTVSRKSPSCACSWV</sequence>
<organism>
    <name type="scientific">Rattus norvegicus</name>
    <name type="common">Rat</name>
    <dbReference type="NCBI Taxonomy" id="10116"/>
    <lineage>
        <taxon>Eukaryota</taxon>
        <taxon>Metazoa</taxon>
        <taxon>Chordata</taxon>
        <taxon>Craniata</taxon>
        <taxon>Vertebrata</taxon>
        <taxon>Euteleostomi</taxon>
        <taxon>Mammalia</taxon>
        <taxon>Eutheria</taxon>
        <taxon>Euarchontoglires</taxon>
        <taxon>Glires</taxon>
        <taxon>Rodentia</taxon>
        <taxon>Myomorpha</taxon>
        <taxon>Muroidea</taxon>
        <taxon>Muridae</taxon>
        <taxon>Murinae</taxon>
        <taxon>Rattus</taxon>
    </lineage>
</organism>
<evidence type="ECO:0000250" key="1"/>
<evidence type="ECO:0000250" key="2">
    <source>
        <dbReference type="UniProtKB" id="P0CG48"/>
    </source>
</evidence>
<evidence type="ECO:0000255" key="3">
    <source>
        <dbReference type="PROSITE-ProRule" id="PRU00214"/>
    </source>
</evidence>
<evidence type="ECO:0000305" key="4"/>
<name>UBC_RAT</name>
<reference key="1">
    <citation type="journal article" date="1994" name="Biochim. Biophys. Acta">
        <title>Nucleotide sequence and expression of the rat polyubiquitin mRNA.</title>
        <authorList>
            <person name="Hayashi T."/>
            <person name="Noga M."/>
            <person name="Matsuda M."/>
        </authorList>
    </citation>
    <scope>NUCLEOTIDE SEQUENCE [MRNA]</scope>
    <source>
        <strain>Wistar</strain>
        <tissue>Brain cortex</tissue>
        <tissue>Hippocampus</tissue>
    </source>
</reference>
<reference key="2">
    <citation type="journal article" date="2004" name="Genome Res.">
        <title>The status, quality, and expansion of the NIH full-length cDNA project: the Mammalian Gene Collection (MGC).</title>
        <authorList>
            <consortium name="The MGC Project Team"/>
        </authorList>
    </citation>
    <scope>NUCLEOTIDE SEQUENCE [LARGE SCALE MRNA] OF 381-810</scope>
    <source>
        <tissue>Prostate</tissue>
    </source>
</reference>
<reference key="3">
    <citation type="journal article" date="1994" name="Biochim. Biophys. Acta">
        <title>Differential feeding-related regulation of ubiquitin and calbindin9kDa in rat duodenum.</title>
        <authorList>
            <person name="Hubbard M.J."/>
            <person name="Carne A."/>
        </authorList>
    </citation>
    <scope>PROTEIN SEQUENCE OF 1-76</scope>
    <source>
        <strain>Wistar</strain>
        <tissue>Duodenum</tissue>
    </source>
</reference>
<reference key="4">
    <citation type="submission" date="2007-07" db="UniProtKB">
        <authorList>
            <person name="Lubec G."/>
            <person name="Diao W."/>
            <person name="Kang S.U."/>
        </authorList>
    </citation>
    <scope>PROTEIN SEQUENCE OF 30-42 AND 55-72</scope>
    <scope>IDENTIFICATION BY MASS SPECTROMETRY</scope>
    <source>
        <strain>Sprague-Dawley</strain>
        <tissue>Brain</tissue>
        <tissue>Hippocampus</tissue>
    </source>
</reference>
<keyword id="KW-0002">3D-structure</keyword>
<keyword id="KW-0013">ADP-ribosylation</keyword>
<keyword id="KW-0963">Cytoplasm</keyword>
<keyword id="KW-0903">Direct protein sequencing</keyword>
<keyword id="KW-1017">Isopeptide bond</keyword>
<keyword id="KW-0472">Membrane</keyword>
<keyword id="KW-0496">Mitochondrion</keyword>
<keyword id="KW-1000">Mitochondrion outer membrane</keyword>
<keyword id="KW-0539">Nucleus</keyword>
<keyword id="KW-0597">Phosphoprotein</keyword>
<keyword id="KW-1185">Reference proteome</keyword>
<keyword id="KW-0677">Repeat</keyword>
<keyword id="KW-0832">Ubl conjugation</keyword>
<feature type="chain" id="PRO_5000139688" description="Ubiquitin">
    <location>
        <begin position="1"/>
        <end position="76"/>
    </location>
</feature>
<feature type="chain" id="PRO_5000139689" description="Ubiquitin">
    <location>
        <begin position="77"/>
        <end position="152"/>
    </location>
</feature>
<feature type="chain" id="PRO_5000139690" description="Ubiquitin">
    <location>
        <begin position="153"/>
        <end position="228"/>
    </location>
</feature>
<feature type="chain" id="PRO_5000139691" description="Ubiquitin">
    <location>
        <begin position="229"/>
        <end position="304"/>
    </location>
</feature>
<feature type="chain" id="PRO_5000139692" description="Ubiquitin">
    <location>
        <begin position="305"/>
        <end position="380"/>
    </location>
</feature>
<feature type="chain" id="PRO_5000139693" description="Ubiquitin">
    <location>
        <begin position="381"/>
        <end position="456"/>
    </location>
</feature>
<feature type="chain" id="PRO_5000139694" description="Ubiquitin">
    <location>
        <begin position="457"/>
        <end position="532"/>
    </location>
</feature>
<feature type="chain" id="PRO_5000139695" description="Ubiquitin">
    <location>
        <begin position="533"/>
        <end position="608"/>
    </location>
</feature>
<feature type="chain" id="PRO_5000139696" description="Ubiquitin">
    <location>
        <begin position="609"/>
        <end position="684"/>
    </location>
</feature>
<feature type="chain" id="PRO_5000139697" description="Ubiquitin">
    <location>
        <begin position="685"/>
        <end position="760"/>
    </location>
</feature>
<feature type="chain" id="PRO_5000139698" description="Ubiquitin-related">
    <location>
        <begin position="761"/>
        <end position="810"/>
    </location>
</feature>
<feature type="domain" description="Ubiquitin-like 1" evidence="3">
    <location>
        <begin position="1"/>
        <end position="76"/>
    </location>
</feature>
<feature type="domain" description="Ubiquitin-like 2" evidence="3">
    <location>
        <begin position="77"/>
        <end position="152"/>
    </location>
</feature>
<feature type="domain" description="Ubiquitin-like 3" evidence="3">
    <location>
        <begin position="153"/>
        <end position="228"/>
    </location>
</feature>
<feature type="domain" description="Ubiquitin-like 4" evidence="3">
    <location>
        <begin position="229"/>
        <end position="304"/>
    </location>
</feature>
<feature type="domain" description="Ubiquitin-like 5" evidence="3">
    <location>
        <begin position="305"/>
        <end position="380"/>
    </location>
</feature>
<feature type="domain" description="Ubiquitin-like 6" evidence="3">
    <location>
        <begin position="381"/>
        <end position="456"/>
    </location>
</feature>
<feature type="domain" description="Ubiquitin-like 7" evidence="3">
    <location>
        <begin position="457"/>
        <end position="532"/>
    </location>
</feature>
<feature type="domain" description="Ubiquitin-like 8" evidence="3">
    <location>
        <begin position="533"/>
        <end position="608"/>
    </location>
</feature>
<feature type="domain" description="Ubiquitin-like 9" evidence="3">
    <location>
        <begin position="609"/>
        <end position="684"/>
    </location>
</feature>
<feature type="domain" description="Ubiquitin-like 10" evidence="3">
    <location>
        <begin position="685"/>
        <end position="760"/>
    </location>
</feature>
<feature type="site" description="Interacts with activating enzyme" evidence="1">
    <location>
        <position position="130"/>
    </location>
</feature>
<feature type="site" description="Essential for function" evidence="1">
    <location>
        <position position="144"/>
    </location>
</feature>
<feature type="site" description="Interacts with activating enzyme" evidence="1">
    <location>
        <position position="148"/>
    </location>
</feature>
<feature type="modified residue" description="Phosphoserine; by PINK1" evidence="2">
    <location>
        <position position="65"/>
    </location>
</feature>
<feature type="modified residue" description="ADP-ribosylglycine" evidence="2">
    <location>
        <position position="76"/>
    </location>
</feature>
<feature type="modified residue" description="Phosphoserine" evidence="2">
    <location>
        <position position="141"/>
    </location>
</feature>
<feature type="cross-link" description="Glycyl lysine isopeptide (Lys-Gly) (interchain with G-Cter in ubiquitin)" evidence="2">
    <location>
        <position position="6"/>
    </location>
</feature>
<feature type="cross-link" description="Glycyl lysine isopeptide (Lys-Gly) (interchain with G-Cter in ubiquitin)" evidence="2">
    <location>
        <position position="11"/>
    </location>
</feature>
<feature type="cross-link" description="Glycyl lysine isopeptide (Lys-Gly) (interchain with G-Cter in ubiquitin)" evidence="2">
    <location>
        <position position="27"/>
    </location>
</feature>
<feature type="cross-link" description="Glycyl lysine isopeptide (Lys-Gly) (interchain with G-Cter in ubiquitin)" evidence="2">
    <location>
        <position position="29"/>
    </location>
</feature>
<feature type="cross-link" description="Glycyl lysine isopeptide (Lys-Gly) (interchain with G-Cter in ubiquitin)" evidence="2">
    <location>
        <position position="33"/>
    </location>
</feature>
<feature type="cross-link" description="Glycyl lysine isopeptide (Lys-Gly) (interchain with G-Cter in ubiquitin)" evidence="2">
    <location>
        <position position="48"/>
    </location>
</feature>
<feature type="cross-link" description="Glycyl lysine isopeptide (Lys-Gly) (interchain with G-Cter in ubiquitin)" evidence="2">
    <location>
        <position position="63"/>
    </location>
</feature>
<feature type="cross-link" description="Glycyl lysine isopeptide (Gly-Lys) (interchain with K-? in acceptor proteins)" evidence="3">
    <location>
        <position position="76"/>
    </location>
</feature>
<feature type="sequence conflict" description="In Ref. 2; AAI03478." evidence="4" ref="2">
    <original>E</original>
    <variation>D</variation>
    <location>
        <position position="776"/>
    </location>
</feature>
<accession>Q63429</accession>
<accession>Q3ZBA1</accession>